<proteinExistence type="inferred from homology"/>
<gene>
    <name evidence="1" type="primary">rpmA</name>
    <name type="ordered locus">RBE_1405</name>
</gene>
<evidence type="ECO:0000255" key="1">
    <source>
        <dbReference type="HAMAP-Rule" id="MF_00539"/>
    </source>
</evidence>
<evidence type="ECO:0000256" key="2">
    <source>
        <dbReference type="SAM" id="MobiDB-lite"/>
    </source>
</evidence>
<evidence type="ECO:0000305" key="3"/>
<feature type="chain" id="PRO_0000277946" description="Large ribosomal subunit protein bL27">
    <location>
        <begin position="1"/>
        <end position="86"/>
    </location>
</feature>
<feature type="region of interest" description="Disordered" evidence="2">
    <location>
        <begin position="1"/>
        <end position="22"/>
    </location>
</feature>
<reference key="1">
    <citation type="journal article" date="2006" name="PLoS Genet.">
        <title>Genome sequence of Rickettsia bellii illuminates the role of amoebae in gene exchanges between intracellular pathogens.</title>
        <authorList>
            <person name="Ogata H."/>
            <person name="La Scola B."/>
            <person name="Audic S."/>
            <person name="Renesto P."/>
            <person name="Blanc G."/>
            <person name="Robert C."/>
            <person name="Fournier P.-E."/>
            <person name="Claverie J.-M."/>
            <person name="Raoult D."/>
        </authorList>
    </citation>
    <scope>NUCLEOTIDE SEQUENCE [LARGE SCALE GENOMIC DNA]</scope>
    <source>
        <strain>RML369-C</strain>
    </source>
</reference>
<organism>
    <name type="scientific">Rickettsia bellii (strain RML369-C)</name>
    <dbReference type="NCBI Taxonomy" id="336407"/>
    <lineage>
        <taxon>Bacteria</taxon>
        <taxon>Pseudomonadati</taxon>
        <taxon>Pseudomonadota</taxon>
        <taxon>Alphaproteobacteria</taxon>
        <taxon>Rickettsiales</taxon>
        <taxon>Rickettsiaceae</taxon>
        <taxon>Rickettsieae</taxon>
        <taxon>Rickettsia</taxon>
        <taxon>belli group</taxon>
    </lineage>
</organism>
<keyword id="KW-0687">Ribonucleoprotein</keyword>
<keyword id="KW-0689">Ribosomal protein</keyword>
<accession>Q1RGM8</accession>
<name>RL27_RICBR</name>
<sequence length="86" mass="9181">MATKKAGGSSRNGRDSAGRRLGVKKADGQYVIPGNIIVRQRGTKIHPGVNVGIGKDHTIFALTSGRVEFLTKRDHKIVNVTEIASA</sequence>
<protein>
    <recommendedName>
        <fullName evidence="1">Large ribosomal subunit protein bL27</fullName>
    </recommendedName>
    <alternativeName>
        <fullName evidence="3">50S ribosomal protein L27</fullName>
    </alternativeName>
</protein>
<dbReference type="EMBL" id="CP000087">
    <property type="protein sequence ID" value="ABE05486.1"/>
    <property type="molecule type" value="Genomic_DNA"/>
</dbReference>
<dbReference type="RefSeq" id="WP_011478055.1">
    <property type="nucleotide sequence ID" value="NC_007940.1"/>
</dbReference>
<dbReference type="SMR" id="Q1RGM8"/>
<dbReference type="KEGG" id="rbe:RBE_1405"/>
<dbReference type="eggNOG" id="COG0211">
    <property type="taxonomic scope" value="Bacteria"/>
</dbReference>
<dbReference type="HOGENOM" id="CLU_095424_4_1_5"/>
<dbReference type="OrthoDB" id="9803474at2"/>
<dbReference type="Proteomes" id="UP000001951">
    <property type="component" value="Chromosome"/>
</dbReference>
<dbReference type="GO" id="GO:1990904">
    <property type="term" value="C:ribonucleoprotein complex"/>
    <property type="evidence" value="ECO:0007669"/>
    <property type="project" value="UniProtKB-KW"/>
</dbReference>
<dbReference type="GO" id="GO:0005840">
    <property type="term" value="C:ribosome"/>
    <property type="evidence" value="ECO:0007669"/>
    <property type="project" value="UniProtKB-KW"/>
</dbReference>
<dbReference type="GO" id="GO:0003735">
    <property type="term" value="F:structural constituent of ribosome"/>
    <property type="evidence" value="ECO:0007669"/>
    <property type="project" value="InterPro"/>
</dbReference>
<dbReference type="GO" id="GO:0006412">
    <property type="term" value="P:translation"/>
    <property type="evidence" value="ECO:0007669"/>
    <property type="project" value="UniProtKB-UniRule"/>
</dbReference>
<dbReference type="FunFam" id="2.40.50.100:FF:000020">
    <property type="entry name" value="50S ribosomal protein L27"/>
    <property type="match status" value="1"/>
</dbReference>
<dbReference type="Gene3D" id="2.40.50.100">
    <property type="match status" value="1"/>
</dbReference>
<dbReference type="HAMAP" id="MF_00539">
    <property type="entry name" value="Ribosomal_bL27"/>
    <property type="match status" value="1"/>
</dbReference>
<dbReference type="InterPro" id="IPR001684">
    <property type="entry name" value="Ribosomal_bL27"/>
</dbReference>
<dbReference type="InterPro" id="IPR018261">
    <property type="entry name" value="Ribosomal_bL27_CS"/>
</dbReference>
<dbReference type="NCBIfam" id="TIGR00062">
    <property type="entry name" value="L27"/>
    <property type="match status" value="1"/>
</dbReference>
<dbReference type="PANTHER" id="PTHR15893:SF0">
    <property type="entry name" value="LARGE RIBOSOMAL SUBUNIT PROTEIN BL27M"/>
    <property type="match status" value="1"/>
</dbReference>
<dbReference type="PANTHER" id="PTHR15893">
    <property type="entry name" value="RIBOSOMAL PROTEIN L27"/>
    <property type="match status" value="1"/>
</dbReference>
<dbReference type="Pfam" id="PF01016">
    <property type="entry name" value="Ribosomal_L27"/>
    <property type="match status" value="1"/>
</dbReference>
<dbReference type="PRINTS" id="PR00063">
    <property type="entry name" value="RIBOSOMALL27"/>
</dbReference>
<dbReference type="SUPFAM" id="SSF110324">
    <property type="entry name" value="Ribosomal L27 protein-like"/>
    <property type="match status" value="1"/>
</dbReference>
<dbReference type="PROSITE" id="PS00831">
    <property type="entry name" value="RIBOSOMAL_L27"/>
    <property type="match status" value="1"/>
</dbReference>
<comment type="similarity">
    <text evidence="1">Belongs to the bacterial ribosomal protein bL27 family.</text>
</comment>